<protein>
    <recommendedName>
        <fullName evidence="1">dCTP deaminase, dUMP-forming</fullName>
        <ecNumber evidence="1">3.5.4.30</ecNumber>
    </recommendedName>
    <alternativeName>
        <fullName evidence="1">Bifunctional dCTP deaminase:dUTPase</fullName>
    </alternativeName>
    <alternativeName>
        <fullName evidence="1">DCD-DUT</fullName>
    </alternativeName>
</protein>
<keyword id="KW-0378">Hydrolase</keyword>
<keyword id="KW-0546">Nucleotide metabolism</keyword>
<keyword id="KW-0547">Nucleotide-binding</keyword>
<name>DCDB_METM7</name>
<gene>
    <name evidence="1" type="primary">dcd</name>
    <name type="ordered locus">MmarC7_0671</name>
</gene>
<dbReference type="EC" id="3.5.4.30" evidence="1"/>
<dbReference type="EMBL" id="CP000745">
    <property type="protein sequence ID" value="ABR65738.1"/>
    <property type="molecule type" value="Genomic_DNA"/>
</dbReference>
<dbReference type="SMR" id="A6VH12"/>
<dbReference type="STRING" id="426368.MmarC7_0671"/>
<dbReference type="KEGG" id="mmz:MmarC7_0671"/>
<dbReference type="eggNOG" id="arCOG04048">
    <property type="taxonomic scope" value="Archaea"/>
</dbReference>
<dbReference type="HOGENOM" id="CLU_087476_2_1_2"/>
<dbReference type="OrthoDB" id="33242at2157"/>
<dbReference type="UniPathway" id="UPA00610">
    <property type="reaction ID" value="UER00667"/>
</dbReference>
<dbReference type="GO" id="GO:0033973">
    <property type="term" value="F:dCTP deaminase (dUMP-forming) activity"/>
    <property type="evidence" value="ECO:0007669"/>
    <property type="project" value="UniProtKB-UniRule"/>
</dbReference>
<dbReference type="GO" id="GO:0008829">
    <property type="term" value="F:dCTP deaminase activity"/>
    <property type="evidence" value="ECO:0007669"/>
    <property type="project" value="InterPro"/>
</dbReference>
<dbReference type="GO" id="GO:0000166">
    <property type="term" value="F:nucleotide binding"/>
    <property type="evidence" value="ECO:0007669"/>
    <property type="project" value="UniProtKB-KW"/>
</dbReference>
<dbReference type="GO" id="GO:0006226">
    <property type="term" value="P:dUMP biosynthetic process"/>
    <property type="evidence" value="ECO:0007669"/>
    <property type="project" value="UniProtKB-UniRule"/>
</dbReference>
<dbReference type="GO" id="GO:0006229">
    <property type="term" value="P:dUTP biosynthetic process"/>
    <property type="evidence" value="ECO:0007669"/>
    <property type="project" value="InterPro"/>
</dbReference>
<dbReference type="CDD" id="cd07557">
    <property type="entry name" value="trimeric_dUTPase"/>
    <property type="match status" value="1"/>
</dbReference>
<dbReference type="Gene3D" id="2.70.40.10">
    <property type="match status" value="1"/>
</dbReference>
<dbReference type="HAMAP" id="MF_00146">
    <property type="entry name" value="dCTP_deaminase"/>
    <property type="match status" value="1"/>
</dbReference>
<dbReference type="InterPro" id="IPR011962">
    <property type="entry name" value="dCTP_deaminase"/>
</dbReference>
<dbReference type="InterPro" id="IPR036157">
    <property type="entry name" value="dUTPase-like_sf"/>
</dbReference>
<dbReference type="InterPro" id="IPR033704">
    <property type="entry name" value="dUTPase_trimeric"/>
</dbReference>
<dbReference type="NCBIfam" id="TIGR02274">
    <property type="entry name" value="dCTP_deam"/>
    <property type="match status" value="1"/>
</dbReference>
<dbReference type="PANTHER" id="PTHR42680">
    <property type="entry name" value="DCTP DEAMINASE"/>
    <property type="match status" value="1"/>
</dbReference>
<dbReference type="PANTHER" id="PTHR42680:SF3">
    <property type="entry name" value="DCTP DEAMINASE"/>
    <property type="match status" value="1"/>
</dbReference>
<dbReference type="Pfam" id="PF22769">
    <property type="entry name" value="DCD"/>
    <property type="match status" value="1"/>
</dbReference>
<dbReference type="SUPFAM" id="SSF51283">
    <property type="entry name" value="dUTPase-like"/>
    <property type="match status" value="1"/>
</dbReference>
<sequence length="206" mass="23546">MILSDKDIFDYVNSKRVLIEPFNSKFVGPCSYDVTLGSEFIKYKEDVYDLKKSLSHNKFEIENSIMVCPLNHHLDETIIENYKEKYNVDCIVSGGLLGTTNEYVELPNDVCAQYQGRSSFGRVFLQTHQTAGWIDSGFRGKITLEIVAYDKPVILYKNQRVGQLIFSKSLSPADVGYSDRKYSKYAGQKSVMASLIKKDFEIDEEE</sequence>
<comment type="function">
    <text evidence="1">Bifunctional enzyme that catalyzes both the deamination of dCTP to dUTP and the hydrolysis of dUTP to dUMP without releasing the toxic dUTP intermediate.</text>
</comment>
<comment type="catalytic activity">
    <reaction evidence="1">
        <text>dCTP + 2 H2O = dUMP + NH4(+) + diphosphate</text>
        <dbReference type="Rhea" id="RHEA:19205"/>
        <dbReference type="ChEBI" id="CHEBI:15377"/>
        <dbReference type="ChEBI" id="CHEBI:28938"/>
        <dbReference type="ChEBI" id="CHEBI:33019"/>
        <dbReference type="ChEBI" id="CHEBI:61481"/>
        <dbReference type="ChEBI" id="CHEBI:246422"/>
        <dbReference type="EC" id="3.5.4.30"/>
    </reaction>
</comment>
<comment type="pathway">
    <text evidence="1">Pyrimidine metabolism; dUMP biosynthesis; dUMP from dCTP: step 1/1.</text>
</comment>
<comment type="subunit">
    <text evidence="1">Homotrimer.</text>
</comment>
<comment type="similarity">
    <text evidence="1">Belongs to the dCTP deaminase family.</text>
</comment>
<evidence type="ECO:0000255" key="1">
    <source>
        <dbReference type="HAMAP-Rule" id="MF_00146"/>
    </source>
</evidence>
<reference key="1">
    <citation type="submission" date="2007-06" db="EMBL/GenBank/DDBJ databases">
        <title>Complete sequence of Methanococcus maripaludis C7.</title>
        <authorList>
            <consortium name="US DOE Joint Genome Institute"/>
            <person name="Copeland A."/>
            <person name="Lucas S."/>
            <person name="Lapidus A."/>
            <person name="Barry K."/>
            <person name="Glavina del Rio T."/>
            <person name="Dalin E."/>
            <person name="Tice H."/>
            <person name="Pitluck S."/>
            <person name="Clum A."/>
            <person name="Schmutz J."/>
            <person name="Larimer F."/>
            <person name="Land M."/>
            <person name="Hauser L."/>
            <person name="Kyrpides N."/>
            <person name="Anderson I."/>
            <person name="Sieprawska-Lupa M."/>
            <person name="Whitman W.B."/>
            <person name="Richardson P."/>
        </authorList>
    </citation>
    <scope>NUCLEOTIDE SEQUENCE [LARGE SCALE GENOMIC DNA]</scope>
    <source>
        <strain>C7 / ATCC BAA-1331</strain>
    </source>
</reference>
<accession>A6VH12</accession>
<organism>
    <name type="scientific">Methanococcus maripaludis (strain C7 / ATCC BAA-1331)</name>
    <dbReference type="NCBI Taxonomy" id="426368"/>
    <lineage>
        <taxon>Archaea</taxon>
        <taxon>Methanobacteriati</taxon>
        <taxon>Methanobacteriota</taxon>
        <taxon>Methanomada group</taxon>
        <taxon>Methanococci</taxon>
        <taxon>Methanococcales</taxon>
        <taxon>Methanococcaceae</taxon>
        <taxon>Methanococcus</taxon>
    </lineage>
</organism>
<proteinExistence type="inferred from homology"/>
<feature type="chain" id="PRO_1000009753" description="dCTP deaminase, dUMP-forming">
    <location>
        <begin position="1"/>
        <end position="206"/>
    </location>
</feature>
<feature type="active site" description="Proton donor/acceptor" evidence="1">
    <location>
        <position position="145"/>
    </location>
</feature>
<feature type="binding site" evidence="1">
    <location>
        <begin position="117"/>
        <end position="122"/>
    </location>
    <ligand>
        <name>dCTP</name>
        <dbReference type="ChEBI" id="CHEBI:61481"/>
    </ligand>
</feature>
<feature type="binding site" evidence="1">
    <location>
        <position position="135"/>
    </location>
    <ligand>
        <name>dCTP</name>
        <dbReference type="ChEBI" id="CHEBI:61481"/>
    </ligand>
</feature>
<feature type="binding site" evidence="1">
    <location>
        <begin position="143"/>
        <end position="145"/>
    </location>
    <ligand>
        <name>dCTP</name>
        <dbReference type="ChEBI" id="CHEBI:61481"/>
    </ligand>
</feature>
<feature type="binding site" evidence="1">
    <location>
        <position position="163"/>
    </location>
    <ligand>
        <name>dCTP</name>
        <dbReference type="ChEBI" id="CHEBI:61481"/>
    </ligand>
</feature>
<feature type="binding site" evidence="1">
    <location>
        <position position="177"/>
    </location>
    <ligand>
        <name>dCTP</name>
        <dbReference type="ChEBI" id="CHEBI:61481"/>
    </ligand>
</feature>
<feature type="binding site" evidence="1">
    <location>
        <position position="184"/>
    </location>
    <ligand>
        <name>dCTP</name>
        <dbReference type="ChEBI" id="CHEBI:61481"/>
    </ligand>
</feature>
<feature type="binding site" evidence="1">
    <location>
        <position position="188"/>
    </location>
    <ligand>
        <name>dCTP</name>
        <dbReference type="ChEBI" id="CHEBI:61481"/>
    </ligand>
</feature>
<feature type="site" description="Important for bifunctional activity" evidence="1">
    <location>
        <begin position="132"/>
        <end position="133"/>
    </location>
</feature>